<dbReference type="EMBL" id="CP001146">
    <property type="protein sequence ID" value="ACI19068.1"/>
    <property type="molecule type" value="Genomic_DNA"/>
</dbReference>
<dbReference type="RefSeq" id="WP_012547700.1">
    <property type="nucleotide sequence ID" value="NC_011297.1"/>
</dbReference>
<dbReference type="SMR" id="B5YEH6"/>
<dbReference type="STRING" id="309799.DICTH_1085"/>
<dbReference type="PaxDb" id="309799-DICTH_1085"/>
<dbReference type="KEGG" id="dth:DICTH_1085"/>
<dbReference type="eggNOG" id="COG0858">
    <property type="taxonomic scope" value="Bacteria"/>
</dbReference>
<dbReference type="HOGENOM" id="CLU_089475_2_1_0"/>
<dbReference type="Proteomes" id="UP000001733">
    <property type="component" value="Chromosome"/>
</dbReference>
<dbReference type="GO" id="GO:0005829">
    <property type="term" value="C:cytosol"/>
    <property type="evidence" value="ECO:0007669"/>
    <property type="project" value="TreeGrafter"/>
</dbReference>
<dbReference type="GO" id="GO:0043024">
    <property type="term" value="F:ribosomal small subunit binding"/>
    <property type="evidence" value="ECO:0007669"/>
    <property type="project" value="TreeGrafter"/>
</dbReference>
<dbReference type="GO" id="GO:0030490">
    <property type="term" value="P:maturation of SSU-rRNA"/>
    <property type="evidence" value="ECO:0007669"/>
    <property type="project" value="UniProtKB-UniRule"/>
</dbReference>
<dbReference type="Gene3D" id="3.30.300.20">
    <property type="match status" value="1"/>
</dbReference>
<dbReference type="HAMAP" id="MF_00003">
    <property type="entry name" value="RbfA"/>
    <property type="match status" value="1"/>
</dbReference>
<dbReference type="InterPro" id="IPR015946">
    <property type="entry name" value="KH_dom-like_a/b"/>
</dbReference>
<dbReference type="InterPro" id="IPR000238">
    <property type="entry name" value="RbfA"/>
</dbReference>
<dbReference type="InterPro" id="IPR023799">
    <property type="entry name" value="RbfA_dom_sf"/>
</dbReference>
<dbReference type="InterPro" id="IPR020053">
    <property type="entry name" value="Ribosome-bd_factorA_CS"/>
</dbReference>
<dbReference type="NCBIfam" id="TIGR00082">
    <property type="entry name" value="rbfA"/>
    <property type="match status" value="1"/>
</dbReference>
<dbReference type="PANTHER" id="PTHR33515">
    <property type="entry name" value="RIBOSOME-BINDING FACTOR A, CHLOROPLASTIC-RELATED"/>
    <property type="match status" value="1"/>
</dbReference>
<dbReference type="PANTHER" id="PTHR33515:SF1">
    <property type="entry name" value="RIBOSOME-BINDING FACTOR A, CHLOROPLASTIC-RELATED"/>
    <property type="match status" value="1"/>
</dbReference>
<dbReference type="Pfam" id="PF02033">
    <property type="entry name" value="RBFA"/>
    <property type="match status" value="1"/>
</dbReference>
<dbReference type="SUPFAM" id="SSF89919">
    <property type="entry name" value="Ribosome-binding factor A, RbfA"/>
    <property type="match status" value="1"/>
</dbReference>
<dbReference type="PROSITE" id="PS01319">
    <property type="entry name" value="RBFA"/>
    <property type="match status" value="1"/>
</dbReference>
<gene>
    <name evidence="1" type="primary">rbfA</name>
    <name type="ordered locus">DICTH_1085</name>
</gene>
<name>RBFA_DICT6</name>
<comment type="function">
    <text evidence="1">One of several proteins that assist in the late maturation steps of the functional core of the 30S ribosomal subunit. Associates with free 30S ribosomal subunits (but not with 30S subunits that are part of 70S ribosomes or polysomes). Required for efficient processing of 16S rRNA. May interact with the 5'-terminal helix region of 16S rRNA.</text>
</comment>
<comment type="subunit">
    <text evidence="1">Monomer. Binds 30S ribosomal subunits, but not 50S ribosomal subunits or 70S ribosomes.</text>
</comment>
<comment type="subcellular location">
    <subcellularLocation>
        <location evidence="1">Cytoplasm</location>
    </subcellularLocation>
</comment>
<comment type="similarity">
    <text evidence="1">Belongs to the RbfA family.</text>
</comment>
<proteinExistence type="inferred from homology"/>
<accession>B5YEH6</accession>
<reference key="1">
    <citation type="journal article" date="2014" name="Genome Announc.">
        <title>Complete Genome Sequence of the Extreme Thermophile Dictyoglomus thermophilum H-6-12.</title>
        <authorList>
            <person name="Coil D.A."/>
            <person name="Badger J.H."/>
            <person name="Forberger H.C."/>
            <person name="Riggs F."/>
            <person name="Madupu R."/>
            <person name="Fedorova N."/>
            <person name="Ward N."/>
            <person name="Robb F.T."/>
            <person name="Eisen J.A."/>
        </authorList>
    </citation>
    <scope>NUCLEOTIDE SEQUENCE [LARGE SCALE GENOMIC DNA]</scope>
    <source>
        <strain>ATCC 35947 / DSM 3960 / H-6-12</strain>
    </source>
</reference>
<feature type="chain" id="PRO_1000088885" description="Ribosome-binding factor A">
    <location>
        <begin position="1"/>
        <end position="120"/>
    </location>
</feature>
<protein>
    <recommendedName>
        <fullName evidence="1">Ribosome-binding factor A</fullName>
    </recommendedName>
</protein>
<evidence type="ECO:0000255" key="1">
    <source>
        <dbReference type="HAMAP-Rule" id="MF_00003"/>
    </source>
</evidence>
<keyword id="KW-0963">Cytoplasm</keyword>
<keyword id="KW-0690">Ribosome biogenesis</keyword>
<sequence>MRQRQERLSALIREEISEILLRRVKDPRISSFLVITEVKMSKDLRYAHIYVSVYGSEEEKKQTMQGLESAKGFIRSELGKDLRIRFVPEIFFELDDSLEKGDRILRKLKELGLEDEQDSE</sequence>
<organism>
    <name type="scientific">Dictyoglomus thermophilum (strain ATCC 35947 / DSM 3960 / H-6-12)</name>
    <dbReference type="NCBI Taxonomy" id="309799"/>
    <lineage>
        <taxon>Bacteria</taxon>
        <taxon>Pseudomonadati</taxon>
        <taxon>Dictyoglomota</taxon>
        <taxon>Dictyoglomia</taxon>
        <taxon>Dictyoglomales</taxon>
        <taxon>Dictyoglomaceae</taxon>
        <taxon>Dictyoglomus</taxon>
    </lineage>
</organism>